<protein>
    <recommendedName>
        <fullName>Bradykinin-potentiating peptide 12a</fullName>
        <shortName>BPP-12a</shortName>
    </recommendedName>
</protein>
<proteinExistence type="evidence at protein level"/>
<dbReference type="GO" id="GO:0005576">
    <property type="term" value="C:extracellular region"/>
    <property type="evidence" value="ECO:0007669"/>
    <property type="project" value="UniProtKB-SubCell"/>
</dbReference>
<dbReference type="GO" id="GO:0030414">
    <property type="term" value="F:peptidase inhibitor activity"/>
    <property type="evidence" value="ECO:0007669"/>
    <property type="project" value="UniProtKB-KW"/>
</dbReference>
<dbReference type="GO" id="GO:0090729">
    <property type="term" value="F:toxin activity"/>
    <property type="evidence" value="ECO:0007669"/>
    <property type="project" value="UniProtKB-KW"/>
</dbReference>
<dbReference type="GO" id="GO:0008217">
    <property type="term" value="P:regulation of blood pressure"/>
    <property type="evidence" value="ECO:0007669"/>
    <property type="project" value="UniProtKB-KW"/>
</dbReference>
<sequence>QGWAWPRPQIPP</sequence>
<comment type="function">
    <text evidence="1">This peptide both inhibits the activity of the angiotensin-converting enzyme (ACE) and enhances the action of bradykinin by inhibiting the peptidases that inactivate it. It acts as an indirect hypotensive agent.</text>
</comment>
<comment type="subcellular location">
    <subcellularLocation>
        <location evidence="1">Secreted</location>
    </subcellularLocation>
</comment>
<comment type="tissue specificity">
    <text evidence="1">Expressed by the venom gland.</text>
</comment>
<comment type="mass spectrometry"/>
<comment type="similarity">
    <text evidence="2">Belongs to the bradykinin-potentiating peptide family.</text>
</comment>
<feature type="peptide" id="PRO_0000292922" description="Bradykinin-potentiating peptide 12a" evidence="1">
    <location>
        <begin position="1"/>
        <end position="12"/>
    </location>
</feature>
<feature type="modified residue" description="Pyrrolidone carboxylic acid" evidence="1">
    <location>
        <position position="1"/>
    </location>
</feature>
<accession>P85168</accession>
<keyword id="KW-0903">Direct protein sequencing</keyword>
<keyword id="KW-0382">Hypotensive agent</keyword>
<keyword id="KW-0481">Metalloenzyme inhibitor</keyword>
<keyword id="KW-0483">Metalloprotease inhibitor</keyword>
<keyword id="KW-0646">Protease inhibitor</keyword>
<keyword id="KW-0873">Pyrrolidone carboxylic acid</keyword>
<keyword id="KW-0964">Secreted</keyword>
<keyword id="KW-0800">Toxin</keyword>
<organism>
    <name type="scientific">Bothrops jararaca</name>
    <name type="common">Jararaca</name>
    <name type="synonym">Bothrops jajaraca</name>
    <dbReference type="NCBI Taxonomy" id="8724"/>
    <lineage>
        <taxon>Eukaryota</taxon>
        <taxon>Metazoa</taxon>
        <taxon>Chordata</taxon>
        <taxon>Craniata</taxon>
        <taxon>Vertebrata</taxon>
        <taxon>Euteleostomi</taxon>
        <taxon>Lepidosauria</taxon>
        <taxon>Squamata</taxon>
        <taxon>Bifurcata</taxon>
        <taxon>Unidentata</taxon>
        <taxon>Episquamata</taxon>
        <taxon>Toxicofera</taxon>
        <taxon>Serpentes</taxon>
        <taxon>Colubroidea</taxon>
        <taxon>Viperidae</taxon>
        <taxon>Crotalinae</taxon>
        <taxon>Bothrops</taxon>
    </lineage>
</organism>
<evidence type="ECO:0000269" key="1">
    <source>
    </source>
</evidence>
<evidence type="ECO:0000305" key="2"/>
<name>BPPCA_BOTJA</name>
<reference evidence="2" key="1">
    <citation type="journal article" date="2004" name="Peptides">
        <title>Identification of five new bradykinin potentiating peptides (BPPs) from Bothrops jararaca crude venom by using electrospray ionization tandem mass spectrometry after a two-step liquid chromatography.</title>
        <authorList>
            <person name="Ianzer D."/>
            <person name="Konno K."/>
            <person name="Marques-Porto R."/>
            <person name="Portaro F.C.V."/>
            <person name="Stoecklin R."/>
            <person name="de Camargo A.C.M."/>
            <person name="Pimenta D.C."/>
        </authorList>
    </citation>
    <scope>PROTEIN SEQUENCE</scope>
    <scope>FUNCTION</scope>
    <scope>SUBCELLULAR LOCATION</scope>
    <scope>TISSUE SPECIFICITY</scope>
    <scope>MASS SPECTROMETRY</scope>
    <scope>PYROGLUTAMATE FORMATION AT GLN-1</scope>
    <source>
        <tissue evidence="1">Venom</tissue>
    </source>
</reference>